<protein>
    <recommendedName>
        <fullName evidence="1">Peptidase T</fullName>
        <ecNumber evidence="1">3.4.11.4</ecNumber>
    </recommendedName>
    <alternativeName>
        <fullName evidence="1">Aminotripeptidase</fullName>
        <shortName evidence="1">Tripeptidase</shortName>
    </alternativeName>
    <alternativeName>
        <fullName evidence="1">Tripeptide aminopeptidase</fullName>
    </alternativeName>
</protein>
<name>PEPT_EDWI9</name>
<comment type="function">
    <text evidence="1">Cleaves the N-terminal amino acid of tripeptides.</text>
</comment>
<comment type="catalytic activity">
    <reaction evidence="1">
        <text>Release of the N-terminal residue from a tripeptide.</text>
        <dbReference type="EC" id="3.4.11.4"/>
    </reaction>
</comment>
<comment type="cofactor">
    <cofactor evidence="1">
        <name>Zn(2+)</name>
        <dbReference type="ChEBI" id="CHEBI:29105"/>
    </cofactor>
    <text evidence="1">Binds 2 Zn(2+) ions per subunit.</text>
</comment>
<comment type="subcellular location">
    <subcellularLocation>
        <location evidence="1">Cytoplasm</location>
    </subcellularLocation>
</comment>
<comment type="similarity">
    <text evidence="1">Belongs to the peptidase M20B family.</text>
</comment>
<proteinExistence type="inferred from homology"/>
<dbReference type="EC" id="3.4.11.4" evidence="1"/>
<dbReference type="EMBL" id="CP001600">
    <property type="protein sequence ID" value="ACR68996.1"/>
    <property type="molecule type" value="Genomic_DNA"/>
</dbReference>
<dbReference type="RefSeq" id="WP_015871142.1">
    <property type="nucleotide sequence ID" value="NZ_CP169062.1"/>
</dbReference>
<dbReference type="SMR" id="C5BFN3"/>
<dbReference type="STRING" id="67780.B6E78_02185"/>
<dbReference type="MEROPS" id="M20.003"/>
<dbReference type="GeneID" id="69538777"/>
<dbReference type="KEGG" id="eic:NT01EI_1819"/>
<dbReference type="PATRIC" id="fig|634503.3.peg.1632"/>
<dbReference type="HOGENOM" id="CLU_053676_0_0_6"/>
<dbReference type="OrthoDB" id="9804934at2"/>
<dbReference type="Proteomes" id="UP000001485">
    <property type="component" value="Chromosome"/>
</dbReference>
<dbReference type="GO" id="GO:0005829">
    <property type="term" value="C:cytosol"/>
    <property type="evidence" value="ECO:0007669"/>
    <property type="project" value="TreeGrafter"/>
</dbReference>
<dbReference type="GO" id="GO:0008237">
    <property type="term" value="F:metallopeptidase activity"/>
    <property type="evidence" value="ECO:0007669"/>
    <property type="project" value="UniProtKB-KW"/>
</dbReference>
<dbReference type="GO" id="GO:0045148">
    <property type="term" value="F:tripeptide aminopeptidase activity"/>
    <property type="evidence" value="ECO:0007669"/>
    <property type="project" value="UniProtKB-UniRule"/>
</dbReference>
<dbReference type="GO" id="GO:0008270">
    <property type="term" value="F:zinc ion binding"/>
    <property type="evidence" value="ECO:0007669"/>
    <property type="project" value="UniProtKB-UniRule"/>
</dbReference>
<dbReference type="GO" id="GO:0043171">
    <property type="term" value="P:peptide catabolic process"/>
    <property type="evidence" value="ECO:0007669"/>
    <property type="project" value="UniProtKB-UniRule"/>
</dbReference>
<dbReference type="GO" id="GO:0006508">
    <property type="term" value="P:proteolysis"/>
    <property type="evidence" value="ECO:0007669"/>
    <property type="project" value="UniProtKB-UniRule"/>
</dbReference>
<dbReference type="CDD" id="cd03892">
    <property type="entry name" value="M20_peptT"/>
    <property type="match status" value="1"/>
</dbReference>
<dbReference type="FunFam" id="3.30.70.360:FF:000002">
    <property type="entry name" value="Peptidase T"/>
    <property type="match status" value="1"/>
</dbReference>
<dbReference type="Gene3D" id="3.30.70.360">
    <property type="match status" value="1"/>
</dbReference>
<dbReference type="Gene3D" id="3.40.630.10">
    <property type="entry name" value="Zn peptidases"/>
    <property type="match status" value="1"/>
</dbReference>
<dbReference type="HAMAP" id="MF_00550">
    <property type="entry name" value="Aminopeptidase_M20"/>
    <property type="match status" value="1"/>
</dbReference>
<dbReference type="InterPro" id="IPR001261">
    <property type="entry name" value="ArgE/DapE_CS"/>
</dbReference>
<dbReference type="InterPro" id="IPR036264">
    <property type="entry name" value="Bact_exopeptidase_dim_dom"/>
</dbReference>
<dbReference type="InterPro" id="IPR002933">
    <property type="entry name" value="Peptidase_M20"/>
</dbReference>
<dbReference type="InterPro" id="IPR011650">
    <property type="entry name" value="Peptidase_M20_dimer"/>
</dbReference>
<dbReference type="InterPro" id="IPR010161">
    <property type="entry name" value="Peptidase_M20B"/>
</dbReference>
<dbReference type="NCBIfam" id="TIGR01882">
    <property type="entry name" value="peptidase-T"/>
    <property type="match status" value="1"/>
</dbReference>
<dbReference type="NCBIfam" id="NF003976">
    <property type="entry name" value="PRK05469.1"/>
    <property type="match status" value="1"/>
</dbReference>
<dbReference type="NCBIfam" id="NF009920">
    <property type="entry name" value="PRK13381.1"/>
    <property type="match status" value="1"/>
</dbReference>
<dbReference type="PANTHER" id="PTHR42994">
    <property type="entry name" value="PEPTIDASE T"/>
    <property type="match status" value="1"/>
</dbReference>
<dbReference type="PANTHER" id="PTHR42994:SF1">
    <property type="entry name" value="PEPTIDASE T"/>
    <property type="match status" value="1"/>
</dbReference>
<dbReference type="Pfam" id="PF07687">
    <property type="entry name" value="M20_dimer"/>
    <property type="match status" value="1"/>
</dbReference>
<dbReference type="Pfam" id="PF01546">
    <property type="entry name" value="Peptidase_M20"/>
    <property type="match status" value="1"/>
</dbReference>
<dbReference type="PIRSF" id="PIRSF037215">
    <property type="entry name" value="Peptidase_M20B"/>
    <property type="match status" value="1"/>
</dbReference>
<dbReference type="SUPFAM" id="SSF55031">
    <property type="entry name" value="Bacterial exopeptidase dimerisation domain"/>
    <property type="match status" value="1"/>
</dbReference>
<dbReference type="SUPFAM" id="SSF53187">
    <property type="entry name" value="Zn-dependent exopeptidases"/>
    <property type="match status" value="1"/>
</dbReference>
<dbReference type="PROSITE" id="PS00758">
    <property type="entry name" value="ARGE_DAPE_CPG2_1"/>
    <property type="match status" value="1"/>
</dbReference>
<dbReference type="PROSITE" id="PS00759">
    <property type="entry name" value="ARGE_DAPE_CPG2_2"/>
    <property type="match status" value="1"/>
</dbReference>
<gene>
    <name evidence="1" type="primary">pepT</name>
    <name type="ordered locus">NT01EI_1819</name>
</gene>
<reference key="1">
    <citation type="submission" date="2009-03" db="EMBL/GenBank/DDBJ databases">
        <title>Complete genome sequence of Edwardsiella ictaluri 93-146.</title>
        <authorList>
            <person name="Williams M.L."/>
            <person name="Gillaspy A.F."/>
            <person name="Dyer D.W."/>
            <person name="Thune R.L."/>
            <person name="Waldbieser G.C."/>
            <person name="Schuster S.C."/>
            <person name="Gipson J."/>
            <person name="Zaitshik J."/>
            <person name="Landry C."/>
            <person name="Lawrence M.L."/>
        </authorList>
    </citation>
    <scope>NUCLEOTIDE SEQUENCE [LARGE SCALE GENOMIC DNA]</scope>
    <source>
        <strain>93-146</strain>
    </source>
</reference>
<evidence type="ECO:0000255" key="1">
    <source>
        <dbReference type="HAMAP-Rule" id="MF_00550"/>
    </source>
</evidence>
<sequence length="412" mass="44584">MNNLLDRFLNYVSFDTQSKPGVRQVPSTEGQFRLARALQSELLALGLEQVTLSEHGCVMATLPANVAWPVPTIGFIAHMDTAPDASGKNVNPQIVENYRGGDIALGIGDEILSPVMFPVLHQLLGQTLITTDGKTLLGADDKSGIAEIMTAMVRLKQGNTPHGEIRVAFTPDEEVGKGAQHFDVAAFGAEWAYTVDGGGVGELECENFNAASVNIKIIGNNVHPGSAKGVMVNALGLANRIHALLPAAEVPEQTDGYEGFYHLVSMKGSVEKAEMHYIVRDFSREGFEARKKHMMAIAKQVGQGLHPDCYIEVTLDDSYYNMRDEVAKHPHIVALARQAMCDLAIEPIERPIRGGTDGAQLSFHGLPCPNLFTGGYNFHGKHEFITLEGMEKAVSVIMRIAELTAGRARVAG</sequence>
<feature type="chain" id="PRO_1000211991" description="Peptidase T">
    <location>
        <begin position="1"/>
        <end position="412"/>
    </location>
</feature>
<feature type="active site" evidence="1">
    <location>
        <position position="80"/>
    </location>
</feature>
<feature type="active site" description="Proton acceptor" evidence="1">
    <location>
        <position position="173"/>
    </location>
</feature>
<feature type="binding site" evidence="1">
    <location>
        <position position="78"/>
    </location>
    <ligand>
        <name>Zn(2+)</name>
        <dbReference type="ChEBI" id="CHEBI:29105"/>
        <label>1</label>
    </ligand>
</feature>
<feature type="binding site" evidence="1">
    <location>
        <position position="140"/>
    </location>
    <ligand>
        <name>Zn(2+)</name>
        <dbReference type="ChEBI" id="CHEBI:29105"/>
        <label>1</label>
    </ligand>
</feature>
<feature type="binding site" evidence="1">
    <location>
        <position position="140"/>
    </location>
    <ligand>
        <name>Zn(2+)</name>
        <dbReference type="ChEBI" id="CHEBI:29105"/>
        <label>2</label>
    </ligand>
</feature>
<feature type="binding site" evidence="1">
    <location>
        <position position="174"/>
    </location>
    <ligand>
        <name>Zn(2+)</name>
        <dbReference type="ChEBI" id="CHEBI:29105"/>
        <label>2</label>
    </ligand>
</feature>
<feature type="binding site" evidence="1">
    <location>
        <position position="196"/>
    </location>
    <ligand>
        <name>Zn(2+)</name>
        <dbReference type="ChEBI" id="CHEBI:29105"/>
        <label>1</label>
    </ligand>
</feature>
<feature type="binding site" evidence="1">
    <location>
        <position position="379"/>
    </location>
    <ligand>
        <name>Zn(2+)</name>
        <dbReference type="ChEBI" id="CHEBI:29105"/>
        <label>2</label>
    </ligand>
</feature>
<keyword id="KW-0031">Aminopeptidase</keyword>
<keyword id="KW-0963">Cytoplasm</keyword>
<keyword id="KW-0378">Hydrolase</keyword>
<keyword id="KW-0479">Metal-binding</keyword>
<keyword id="KW-0482">Metalloprotease</keyword>
<keyword id="KW-0645">Protease</keyword>
<keyword id="KW-0862">Zinc</keyword>
<accession>C5BFN3</accession>
<organism>
    <name type="scientific">Edwardsiella ictaluri (strain 93-146)</name>
    <dbReference type="NCBI Taxonomy" id="634503"/>
    <lineage>
        <taxon>Bacteria</taxon>
        <taxon>Pseudomonadati</taxon>
        <taxon>Pseudomonadota</taxon>
        <taxon>Gammaproteobacteria</taxon>
        <taxon>Enterobacterales</taxon>
        <taxon>Hafniaceae</taxon>
        <taxon>Edwardsiella</taxon>
    </lineage>
</organism>